<organism>
    <name type="scientific">Saccharomyces cerevisiae (strain ATCC 204508 / S288c)</name>
    <name type="common">Baker's yeast</name>
    <dbReference type="NCBI Taxonomy" id="559292"/>
    <lineage>
        <taxon>Eukaryota</taxon>
        <taxon>Fungi</taxon>
        <taxon>Dikarya</taxon>
        <taxon>Ascomycota</taxon>
        <taxon>Saccharomycotina</taxon>
        <taxon>Saccharomycetes</taxon>
        <taxon>Saccharomycetales</taxon>
        <taxon>Saccharomycetaceae</taxon>
        <taxon>Saccharomyces</taxon>
    </lineage>
</organism>
<name>LYS14_YEAST</name>
<sequence length="790" mass="89397">MFESVNLDENSPEDRELAKVLSPPGSYLSPASLDSGSSFTNSGTSTSCFEPKNNLPSLSFLNARAGSLGGIFNHKQMTSPSNSNIGGENVESTTSSNDGSNENAGHPTTSEQDQNADHPTISQADDNGHSSLTPNPAVTSTVTDKKGNTVKRKYSRNGCSECKRRRMKCDETKPTCWQCARLNRQCVYVLNPKNKKRRTSNAQRVKEFRKHSTSLDNDHNNARKRQHSSCKAEKKKKVRQNLSEDTTDPKPITDNGKNVPLDEIESLEIPNLDLTTTMNGYDVNLLMQNLNDMVNMKLHDSYLLNEELKGLDLPDLDIPELLPASNVNSSVPISFLVNNVITFNTKLSSFKLGGIHDKYLKIFYYDCLDSIAPFFQNQGNPLRDILLSFAKNEAYLLSSILATGASIAYRKSNNLEDERNYCAYLSHCLSLLGEQFKNESNVLNRIEPIILTVIMLAWDCIYSMNSQWRSHLKGVTDLFKKINAGNSSKVLNVAKCWFKVMETFASISTVFGGSLIDNNDLDAIFDPYDYQYVDSLKFLNIMTPLNEFNLLRGHKEDFDLVIKEVFKSLNTIRSTEKNYFSKEEGLFTKKLDYLLLSSQTSSEKSKDQISYFNTQKILVEIDKQLDYEFIDKSGIIPSDNQSHPRISNIHDNAIDMVTLKNGEEVAISWYDISHQTQVLSFLLIVLLKLLGMPKESSTIQQVVKKIMSFFKFLDSDSPPQNSRTCYSNFAVLIAGLNAMDEETRAIVKRYYKINGGKFQKLTEHNLNRLEKVWYGKNQNYRLEEQDVLTW</sequence>
<accession>P40971</accession>
<accession>D6VS18</accession>
<dbReference type="EMBL" id="X77361">
    <property type="protein sequence ID" value="CAA54550.1"/>
    <property type="molecule type" value="Genomic_DNA"/>
</dbReference>
<dbReference type="EMBL" id="Z68196">
    <property type="protein sequence ID" value="CAA92371.1"/>
    <property type="molecule type" value="Genomic_DNA"/>
</dbReference>
<dbReference type="EMBL" id="Z74330">
    <property type="protein sequence ID" value="CAA98856.1"/>
    <property type="molecule type" value="Genomic_DNA"/>
</dbReference>
<dbReference type="EMBL" id="AY723768">
    <property type="protein sequence ID" value="AAU09685.1"/>
    <property type="molecule type" value="Genomic_DNA"/>
</dbReference>
<dbReference type="EMBL" id="BK006938">
    <property type="protein sequence ID" value="DAA11878.1"/>
    <property type="molecule type" value="Genomic_DNA"/>
</dbReference>
<dbReference type="PIR" id="S61587">
    <property type="entry name" value="S61587"/>
</dbReference>
<dbReference type="RefSeq" id="NP_010317.3">
    <property type="nucleotide sequence ID" value="NM_001180342.3"/>
</dbReference>
<dbReference type="SMR" id="P40971"/>
<dbReference type="BioGRID" id="32083">
    <property type="interactions" value="28"/>
</dbReference>
<dbReference type="DIP" id="DIP-5178N"/>
<dbReference type="FunCoup" id="P40971">
    <property type="interactions" value="112"/>
</dbReference>
<dbReference type="IntAct" id="P40971">
    <property type="interactions" value="63"/>
</dbReference>
<dbReference type="MINT" id="P40971"/>
<dbReference type="STRING" id="4932.YDR034C"/>
<dbReference type="iPTMnet" id="P40971"/>
<dbReference type="PaxDb" id="4932-YDR034C"/>
<dbReference type="PeptideAtlas" id="P40971"/>
<dbReference type="EnsemblFungi" id="YDR034C_mRNA">
    <property type="protein sequence ID" value="YDR034C"/>
    <property type="gene ID" value="YDR034C"/>
</dbReference>
<dbReference type="GeneID" id="851598"/>
<dbReference type="KEGG" id="sce:YDR034C"/>
<dbReference type="AGR" id="SGD:S000002441"/>
<dbReference type="SGD" id="S000002441">
    <property type="gene designation" value="LYS14"/>
</dbReference>
<dbReference type="VEuPathDB" id="FungiDB:YDR034C"/>
<dbReference type="eggNOG" id="ENOG502QW5G">
    <property type="taxonomic scope" value="Eukaryota"/>
</dbReference>
<dbReference type="HOGENOM" id="CLU_014489_1_0_1"/>
<dbReference type="InParanoid" id="P40971"/>
<dbReference type="OMA" id="WYDISHQ"/>
<dbReference type="OrthoDB" id="424974at2759"/>
<dbReference type="BioCyc" id="YEAST:G3O-29649-MONOMER"/>
<dbReference type="BioGRID-ORCS" id="851598">
    <property type="hits" value="1 hit in 13 CRISPR screens"/>
</dbReference>
<dbReference type="PRO" id="PR:P40971"/>
<dbReference type="Proteomes" id="UP000002311">
    <property type="component" value="Chromosome IV"/>
</dbReference>
<dbReference type="RNAct" id="P40971">
    <property type="molecule type" value="protein"/>
</dbReference>
<dbReference type="GO" id="GO:0005634">
    <property type="term" value="C:nucleus"/>
    <property type="evidence" value="ECO:0000314"/>
    <property type="project" value="SGD"/>
</dbReference>
<dbReference type="GO" id="GO:0003700">
    <property type="term" value="F:DNA-binding transcription factor activity"/>
    <property type="evidence" value="ECO:0000318"/>
    <property type="project" value="GO_Central"/>
</dbReference>
<dbReference type="GO" id="GO:0000981">
    <property type="term" value="F:DNA-binding transcription factor activity, RNA polymerase II-specific"/>
    <property type="evidence" value="ECO:0007669"/>
    <property type="project" value="InterPro"/>
</dbReference>
<dbReference type="GO" id="GO:0000978">
    <property type="term" value="F:RNA polymerase II cis-regulatory region sequence-specific DNA binding"/>
    <property type="evidence" value="ECO:0000314"/>
    <property type="project" value="SGD"/>
</dbReference>
<dbReference type="GO" id="GO:0043565">
    <property type="term" value="F:sequence-specific DNA binding"/>
    <property type="evidence" value="ECO:0007005"/>
    <property type="project" value="SGD"/>
</dbReference>
<dbReference type="GO" id="GO:0000976">
    <property type="term" value="F:transcription cis-regulatory region binding"/>
    <property type="evidence" value="ECO:0000318"/>
    <property type="project" value="GO_Central"/>
</dbReference>
<dbReference type="GO" id="GO:0008270">
    <property type="term" value="F:zinc ion binding"/>
    <property type="evidence" value="ECO:0007669"/>
    <property type="project" value="InterPro"/>
</dbReference>
<dbReference type="GO" id="GO:0009085">
    <property type="term" value="P:lysine biosynthetic process"/>
    <property type="evidence" value="ECO:0007669"/>
    <property type="project" value="UniProtKB-KW"/>
</dbReference>
<dbReference type="GO" id="GO:2001196">
    <property type="term" value="P:positive regulation of lysine biosynthetic process via alpha-aminoadipate and saccharopine"/>
    <property type="evidence" value="ECO:0000315"/>
    <property type="project" value="SGD"/>
</dbReference>
<dbReference type="GO" id="GO:0045944">
    <property type="term" value="P:positive regulation of transcription by RNA polymerase II"/>
    <property type="evidence" value="ECO:0000314"/>
    <property type="project" value="SGD"/>
</dbReference>
<dbReference type="CDD" id="cd00067">
    <property type="entry name" value="GAL4"/>
    <property type="match status" value="1"/>
</dbReference>
<dbReference type="FunFam" id="4.10.240.10:FF:000042">
    <property type="entry name" value="Lysine requiring protein"/>
    <property type="match status" value="1"/>
</dbReference>
<dbReference type="Gene3D" id="4.10.240.10">
    <property type="entry name" value="Zn(2)-C6 fungal-type DNA-binding domain"/>
    <property type="match status" value="1"/>
</dbReference>
<dbReference type="InterPro" id="IPR021858">
    <property type="entry name" value="Fun_TF"/>
</dbReference>
<dbReference type="InterPro" id="IPR036864">
    <property type="entry name" value="Zn2-C6_fun-type_DNA-bd_sf"/>
</dbReference>
<dbReference type="InterPro" id="IPR001138">
    <property type="entry name" value="Zn2Cys6_DnaBD"/>
</dbReference>
<dbReference type="PANTHER" id="PTHR37534:SF49">
    <property type="entry name" value="LYSINE BIOSYNTHESIS REGULATORY PROTEIN LYS14"/>
    <property type="match status" value="1"/>
</dbReference>
<dbReference type="PANTHER" id="PTHR37534">
    <property type="entry name" value="TRANSCRIPTIONAL ACTIVATOR PROTEIN UGA3"/>
    <property type="match status" value="1"/>
</dbReference>
<dbReference type="Pfam" id="PF11951">
    <property type="entry name" value="Fungal_trans_2"/>
    <property type="match status" value="1"/>
</dbReference>
<dbReference type="Pfam" id="PF00172">
    <property type="entry name" value="Zn_clus"/>
    <property type="match status" value="1"/>
</dbReference>
<dbReference type="SMART" id="SM00066">
    <property type="entry name" value="GAL4"/>
    <property type="match status" value="1"/>
</dbReference>
<dbReference type="SUPFAM" id="SSF57701">
    <property type="entry name" value="Zn2/Cys6 DNA-binding domain"/>
    <property type="match status" value="1"/>
</dbReference>
<dbReference type="PROSITE" id="PS00463">
    <property type="entry name" value="ZN2_CY6_FUNGAL_1"/>
    <property type="match status" value="1"/>
</dbReference>
<dbReference type="PROSITE" id="PS50048">
    <property type="entry name" value="ZN2_CY6_FUNGAL_2"/>
    <property type="match status" value="1"/>
</dbReference>
<keyword id="KW-0010">Activator</keyword>
<keyword id="KW-0028">Amino-acid biosynthesis</keyword>
<keyword id="KW-0238">DNA-binding</keyword>
<keyword id="KW-0457">Lysine biosynthesis</keyword>
<keyword id="KW-0479">Metal-binding</keyword>
<keyword id="KW-0539">Nucleus</keyword>
<keyword id="KW-1185">Reference proteome</keyword>
<keyword id="KW-0804">Transcription</keyword>
<keyword id="KW-0805">Transcription regulation</keyword>
<keyword id="KW-0862">Zinc</keyword>
<gene>
    <name type="primary">LYS14</name>
    <name type="ordered locus">YDR034C</name>
    <name type="ORF">YD9673.04C</name>
</gene>
<evidence type="ECO:0000255" key="1">
    <source>
        <dbReference type="PROSITE-ProRule" id="PRU00227"/>
    </source>
</evidence>
<evidence type="ECO:0000256" key="2">
    <source>
        <dbReference type="SAM" id="MobiDB-lite"/>
    </source>
</evidence>
<evidence type="ECO:0000269" key="3">
    <source>
    </source>
</evidence>
<evidence type="ECO:0000305" key="4"/>
<protein>
    <recommendedName>
        <fullName>Lysine biosynthesis regulatory protein LYS14</fullName>
    </recommendedName>
</protein>
<proteinExistence type="evidence at protein level"/>
<comment type="function">
    <text>Activates the transcription of lysine biosynthesis genes. This activation is dependent on the inducer alpha-aminoadipate semialdehyde and repressed by lysine.</text>
</comment>
<comment type="subcellular location">
    <subcellularLocation>
        <location>Nucleus</location>
    </subcellularLocation>
</comment>
<comment type="miscellaneous">
    <text evidence="3">Present with 450 molecules/cell in log phase SD medium.</text>
</comment>
<reference key="1">
    <citation type="journal article" date="1994" name="Mol. Cell. Biol.">
        <title>Repression of the genes for lysine biosynthesis in Saccharomyces cerevisiae is caused by limitation of Lys14-dependent transcriptional activation.</title>
        <authorList>
            <person name="Feller A."/>
            <person name="Dubois E."/>
            <person name="Ramos F."/>
            <person name="Pierard A."/>
        </authorList>
    </citation>
    <scope>NUCLEOTIDE SEQUENCE [GENOMIC DNA]</scope>
    <source>
        <strain>1278B</strain>
    </source>
</reference>
<reference key="2">
    <citation type="journal article" date="1997" name="Nature">
        <title>The nucleotide sequence of Saccharomyces cerevisiae chromosome IV.</title>
        <authorList>
            <person name="Jacq C."/>
            <person name="Alt-Moerbe J."/>
            <person name="Andre B."/>
            <person name="Arnold W."/>
            <person name="Bahr A."/>
            <person name="Ballesta J.P.G."/>
            <person name="Bargues M."/>
            <person name="Baron L."/>
            <person name="Becker A."/>
            <person name="Biteau N."/>
            <person name="Bloecker H."/>
            <person name="Blugeon C."/>
            <person name="Boskovic J."/>
            <person name="Brandt P."/>
            <person name="Brueckner M."/>
            <person name="Buitrago M.J."/>
            <person name="Coster F."/>
            <person name="Delaveau T."/>
            <person name="del Rey F."/>
            <person name="Dujon B."/>
            <person name="Eide L.G."/>
            <person name="Garcia-Cantalejo J.M."/>
            <person name="Goffeau A."/>
            <person name="Gomez-Peris A."/>
            <person name="Granotier C."/>
            <person name="Hanemann V."/>
            <person name="Hankeln T."/>
            <person name="Hoheisel J.D."/>
            <person name="Jaeger W."/>
            <person name="Jimenez A."/>
            <person name="Jonniaux J.-L."/>
            <person name="Kraemer C."/>
            <person name="Kuester H."/>
            <person name="Laamanen P."/>
            <person name="Legros Y."/>
            <person name="Louis E.J."/>
            <person name="Moeller-Rieker S."/>
            <person name="Monnet A."/>
            <person name="Moro M."/>
            <person name="Mueller-Auer S."/>
            <person name="Nussbaumer B."/>
            <person name="Paricio N."/>
            <person name="Paulin L."/>
            <person name="Perea J."/>
            <person name="Perez-Alonso M."/>
            <person name="Perez-Ortin J.E."/>
            <person name="Pohl T.M."/>
            <person name="Prydz H."/>
            <person name="Purnelle B."/>
            <person name="Rasmussen S.W."/>
            <person name="Remacha M.A."/>
            <person name="Revuelta J.L."/>
            <person name="Rieger M."/>
            <person name="Salom D."/>
            <person name="Saluz H.P."/>
            <person name="Saiz J.E."/>
            <person name="Saren A.-M."/>
            <person name="Schaefer M."/>
            <person name="Scharfe M."/>
            <person name="Schmidt E.R."/>
            <person name="Schneider C."/>
            <person name="Scholler P."/>
            <person name="Schwarz S."/>
            <person name="Soler-Mira A."/>
            <person name="Urrestarazu L.A."/>
            <person name="Verhasselt P."/>
            <person name="Vissers S."/>
            <person name="Voet M."/>
            <person name="Volckaert G."/>
            <person name="Wagner G."/>
            <person name="Wambutt R."/>
            <person name="Wedler E."/>
            <person name="Wedler H."/>
            <person name="Woelfl S."/>
            <person name="Harris D.E."/>
            <person name="Bowman S."/>
            <person name="Brown D."/>
            <person name="Churcher C.M."/>
            <person name="Connor R."/>
            <person name="Dedman K."/>
            <person name="Gentles S."/>
            <person name="Hamlin N."/>
            <person name="Hunt S."/>
            <person name="Jones L."/>
            <person name="McDonald S."/>
            <person name="Murphy L.D."/>
            <person name="Niblett D."/>
            <person name="Odell C."/>
            <person name="Oliver K."/>
            <person name="Rajandream M.A."/>
            <person name="Richards C."/>
            <person name="Shore L."/>
            <person name="Walsh S.V."/>
            <person name="Barrell B.G."/>
            <person name="Dietrich F.S."/>
            <person name="Mulligan J.T."/>
            <person name="Allen E."/>
            <person name="Araujo R."/>
            <person name="Aviles E."/>
            <person name="Berno A."/>
            <person name="Carpenter J."/>
            <person name="Chen E."/>
            <person name="Cherry J.M."/>
            <person name="Chung E."/>
            <person name="Duncan M."/>
            <person name="Hunicke-Smith S."/>
            <person name="Hyman R.W."/>
            <person name="Komp C."/>
            <person name="Lashkari D."/>
            <person name="Lew H."/>
            <person name="Lin D."/>
            <person name="Mosedale D."/>
            <person name="Nakahara K."/>
            <person name="Namath A."/>
            <person name="Oefner P."/>
            <person name="Oh C."/>
            <person name="Petel F.X."/>
            <person name="Roberts D."/>
            <person name="Schramm S."/>
            <person name="Schroeder M."/>
            <person name="Shogren T."/>
            <person name="Shroff N."/>
            <person name="Winant A."/>
            <person name="Yelton M.A."/>
            <person name="Botstein D."/>
            <person name="Davis R.W."/>
            <person name="Johnston M."/>
            <person name="Andrews S."/>
            <person name="Brinkman R."/>
            <person name="Cooper J."/>
            <person name="Ding H."/>
            <person name="Du Z."/>
            <person name="Favello A."/>
            <person name="Fulton L."/>
            <person name="Gattung S."/>
            <person name="Greco T."/>
            <person name="Hallsworth K."/>
            <person name="Hawkins J."/>
            <person name="Hillier L.W."/>
            <person name="Jier M."/>
            <person name="Johnson D."/>
            <person name="Johnston L."/>
            <person name="Kirsten J."/>
            <person name="Kucaba T."/>
            <person name="Langston Y."/>
            <person name="Latreille P."/>
            <person name="Le T."/>
            <person name="Mardis E."/>
            <person name="Menezes S."/>
            <person name="Miller N."/>
            <person name="Nhan M."/>
            <person name="Pauley A."/>
            <person name="Peluso D."/>
            <person name="Rifkin L."/>
            <person name="Riles L."/>
            <person name="Taich A."/>
            <person name="Trevaskis E."/>
            <person name="Vignati D."/>
            <person name="Wilcox L."/>
            <person name="Wohldman P."/>
            <person name="Vaudin M."/>
            <person name="Wilson R."/>
            <person name="Waterston R."/>
            <person name="Albermann K."/>
            <person name="Hani J."/>
            <person name="Heumann K."/>
            <person name="Kleine K."/>
            <person name="Mewes H.-W."/>
            <person name="Zollner A."/>
            <person name="Zaccaria P."/>
        </authorList>
    </citation>
    <scope>NUCLEOTIDE SEQUENCE [LARGE SCALE GENOMIC DNA]</scope>
    <source>
        <strain>ATCC 204508 / S288c</strain>
    </source>
</reference>
<reference key="3">
    <citation type="journal article" date="2014" name="G3 (Bethesda)">
        <title>The reference genome sequence of Saccharomyces cerevisiae: Then and now.</title>
        <authorList>
            <person name="Engel S.R."/>
            <person name="Dietrich F.S."/>
            <person name="Fisk D.G."/>
            <person name="Binkley G."/>
            <person name="Balakrishnan R."/>
            <person name="Costanzo M.C."/>
            <person name="Dwight S.S."/>
            <person name="Hitz B.C."/>
            <person name="Karra K."/>
            <person name="Nash R.S."/>
            <person name="Weng S."/>
            <person name="Wong E.D."/>
            <person name="Lloyd P."/>
            <person name="Skrzypek M.S."/>
            <person name="Miyasato S.R."/>
            <person name="Simison M."/>
            <person name="Cherry J.M."/>
        </authorList>
    </citation>
    <scope>GENOME REANNOTATION</scope>
    <source>
        <strain>ATCC 204508 / S288c</strain>
    </source>
</reference>
<reference key="4">
    <citation type="journal article" date="2007" name="Genome Res.">
        <title>Approaching a complete repository of sequence-verified protein-encoding clones for Saccharomyces cerevisiae.</title>
        <authorList>
            <person name="Hu Y."/>
            <person name="Rolfs A."/>
            <person name="Bhullar B."/>
            <person name="Murthy T.V.S."/>
            <person name="Zhu C."/>
            <person name="Berger M.F."/>
            <person name="Camargo A.A."/>
            <person name="Kelley F."/>
            <person name="McCarron S."/>
            <person name="Jepson D."/>
            <person name="Richardson A."/>
            <person name="Raphael J."/>
            <person name="Moreira D."/>
            <person name="Taycher E."/>
            <person name="Zuo D."/>
            <person name="Mohr S."/>
            <person name="Kane M.F."/>
            <person name="Williamson J."/>
            <person name="Simpson A.J.G."/>
            <person name="Bulyk M.L."/>
            <person name="Harlow E."/>
            <person name="Marsischky G."/>
            <person name="Kolodner R.D."/>
            <person name="LaBaer J."/>
        </authorList>
    </citation>
    <scope>NUCLEOTIDE SEQUENCE [GENOMIC DNA]</scope>
    <source>
        <strain>ATCC 204508 / S288c</strain>
    </source>
</reference>
<reference key="5">
    <citation type="journal article" date="2003" name="Nature">
        <title>Global analysis of protein expression in yeast.</title>
        <authorList>
            <person name="Ghaemmaghami S."/>
            <person name="Huh W.-K."/>
            <person name="Bower K."/>
            <person name="Howson R.W."/>
            <person name="Belle A."/>
            <person name="Dephoure N."/>
            <person name="O'Shea E.K."/>
            <person name="Weissman J.S."/>
        </authorList>
    </citation>
    <scope>LEVEL OF PROTEIN EXPRESSION [LARGE SCALE ANALYSIS]</scope>
</reference>
<reference key="6">
    <citation type="journal article" date="2008" name="Mol. Cell. Proteomics">
        <title>A multidimensional chromatography technology for in-depth phosphoproteome analysis.</title>
        <authorList>
            <person name="Albuquerque C.P."/>
            <person name="Smolka M.B."/>
            <person name="Payne S.H."/>
            <person name="Bafna V."/>
            <person name="Eng J."/>
            <person name="Zhou H."/>
        </authorList>
    </citation>
    <scope>IDENTIFICATION BY MASS SPECTROMETRY [LARGE SCALE ANALYSIS]</scope>
</reference>
<reference key="7">
    <citation type="journal article" date="2012" name="Proc. Natl. Acad. Sci. U.S.A.">
        <title>N-terminal acetylome analyses and functional insights of the N-terminal acetyltransferase NatB.</title>
        <authorList>
            <person name="Van Damme P."/>
            <person name="Lasa M."/>
            <person name="Polevoda B."/>
            <person name="Gazquez C."/>
            <person name="Elosegui-Artola A."/>
            <person name="Kim D.S."/>
            <person name="De Juan-Pardo E."/>
            <person name="Demeyer K."/>
            <person name="Hole K."/>
            <person name="Larrea E."/>
            <person name="Timmerman E."/>
            <person name="Prieto J."/>
            <person name="Arnesen T."/>
            <person name="Sherman F."/>
            <person name="Gevaert K."/>
            <person name="Aldabe R."/>
        </authorList>
    </citation>
    <scope>IDENTIFICATION BY MASS SPECTROMETRY [LARGE SCALE ANALYSIS]</scope>
</reference>
<feature type="chain" id="PRO_0000114955" description="Lysine biosynthesis regulatory protein LYS14">
    <location>
        <begin position="1"/>
        <end position="790"/>
    </location>
</feature>
<feature type="DNA-binding region" description="Zn(2)-C6 fungal-type" evidence="1">
    <location>
        <begin position="159"/>
        <end position="186"/>
    </location>
</feature>
<feature type="region of interest" description="Disordered" evidence="2">
    <location>
        <begin position="1"/>
        <end position="50"/>
    </location>
</feature>
<feature type="region of interest" description="Disordered" evidence="2">
    <location>
        <begin position="72"/>
        <end position="157"/>
    </location>
</feature>
<feature type="region of interest" description="Disordered" evidence="2">
    <location>
        <begin position="195"/>
        <end position="258"/>
    </location>
</feature>
<feature type="compositionally biased region" description="Low complexity" evidence="2">
    <location>
        <begin position="35"/>
        <end position="47"/>
    </location>
</feature>
<feature type="compositionally biased region" description="Polar residues" evidence="2">
    <location>
        <begin position="75"/>
        <end position="113"/>
    </location>
</feature>
<feature type="compositionally biased region" description="Polar residues" evidence="2">
    <location>
        <begin position="120"/>
        <end position="142"/>
    </location>
</feature>
<feature type="compositionally biased region" description="Basic residues" evidence="2">
    <location>
        <begin position="222"/>
        <end position="239"/>
    </location>
</feature>
<feature type="sequence conflict" description="In Ref. 1; CAA54550." evidence="4" ref="1">
    <original>I</original>
    <variation>F</variation>
    <location>
        <position position="121"/>
    </location>
</feature>
<feature type="sequence conflict" description="In Ref. 1; CAA54550." evidence="4" ref="1">
    <original>K</original>
    <variation>R</variation>
    <location>
        <position position="760"/>
    </location>
</feature>